<gene>
    <name type="primary">tsaE</name>
    <name type="ordered locus">RF_0017</name>
</gene>
<proteinExistence type="inferred from homology"/>
<feature type="chain" id="PRO_0000281042" description="tRNA threonylcarbamoyladenosine biosynthesis protein TsaE">
    <location>
        <begin position="1"/>
        <end position="171"/>
    </location>
</feature>
<feature type="binding site" evidence="1">
    <location>
        <position position="7"/>
    </location>
    <ligand>
        <name>ATP</name>
        <dbReference type="ChEBI" id="CHEBI:30616"/>
    </ligand>
</feature>
<feature type="binding site" evidence="1">
    <location>
        <begin position="34"/>
        <end position="39"/>
    </location>
    <ligand>
        <name>ATP</name>
        <dbReference type="ChEBI" id="CHEBI:30616"/>
    </ligand>
</feature>
<feature type="binding site" evidence="1">
    <location>
        <position position="38"/>
    </location>
    <ligand>
        <name>Mg(2+)</name>
        <dbReference type="ChEBI" id="CHEBI:18420"/>
    </ligand>
</feature>
<feature type="binding site" evidence="1">
    <location>
        <position position="104"/>
    </location>
    <ligand>
        <name>Mg(2+)</name>
        <dbReference type="ChEBI" id="CHEBI:18420"/>
    </ligand>
</feature>
<feature type="binding site" evidence="1">
    <location>
        <position position="127"/>
    </location>
    <ligand>
        <name>ATP</name>
        <dbReference type="ChEBI" id="CHEBI:30616"/>
    </ligand>
</feature>
<organism>
    <name type="scientific">Rickettsia felis (strain ATCC VR-1525 / URRWXCal2)</name>
    <name type="common">Rickettsia azadi</name>
    <dbReference type="NCBI Taxonomy" id="315456"/>
    <lineage>
        <taxon>Bacteria</taxon>
        <taxon>Pseudomonadati</taxon>
        <taxon>Pseudomonadota</taxon>
        <taxon>Alphaproteobacteria</taxon>
        <taxon>Rickettsiales</taxon>
        <taxon>Rickettsiaceae</taxon>
        <taxon>Rickettsieae</taxon>
        <taxon>Rickettsia</taxon>
        <taxon>spotted fever group</taxon>
    </lineage>
</organism>
<reference key="1">
    <citation type="journal article" date="2005" name="PLoS Biol.">
        <title>The genome sequence of Rickettsia felis identifies the first putative conjugative plasmid in an obligate intracellular parasite.</title>
        <authorList>
            <person name="Ogata H."/>
            <person name="Renesto P."/>
            <person name="Audic S."/>
            <person name="Robert C."/>
            <person name="Blanc G."/>
            <person name="Fournier P.-E."/>
            <person name="Parinello H."/>
            <person name="Claverie J.-M."/>
            <person name="Raoult D."/>
        </authorList>
    </citation>
    <scope>NUCLEOTIDE SEQUENCE [LARGE SCALE GENOMIC DNA]</scope>
    <source>
        <strain>ATCC VR-1525 / URRWXCal2</strain>
    </source>
</reference>
<name>TSAE_RICFE</name>
<dbReference type="EMBL" id="CP000053">
    <property type="protein sequence ID" value="AAY60868.1"/>
    <property type="molecule type" value="Genomic_DNA"/>
</dbReference>
<dbReference type="SMR" id="Q4UNJ0"/>
<dbReference type="STRING" id="315456.RF_0017"/>
<dbReference type="KEGG" id="rfe:RF_0017"/>
<dbReference type="eggNOG" id="COG0802">
    <property type="taxonomic scope" value="Bacteria"/>
</dbReference>
<dbReference type="HOGENOM" id="CLU_087829_5_0_5"/>
<dbReference type="OrthoDB" id="9800307at2"/>
<dbReference type="Proteomes" id="UP000008548">
    <property type="component" value="Chromosome"/>
</dbReference>
<dbReference type="GO" id="GO:0005737">
    <property type="term" value="C:cytoplasm"/>
    <property type="evidence" value="ECO:0007669"/>
    <property type="project" value="UniProtKB-SubCell"/>
</dbReference>
<dbReference type="GO" id="GO:0005524">
    <property type="term" value="F:ATP binding"/>
    <property type="evidence" value="ECO:0007669"/>
    <property type="project" value="UniProtKB-KW"/>
</dbReference>
<dbReference type="GO" id="GO:0046872">
    <property type="term" value="F:metal ion binding"/>
    <property type="evidence" value="ECO:0007669"/>
    <property type="project" value="UniProtKB-KW"/>
</dbReference>
<dbReference type="GO" id="GO:0002949">
    <property type="term" value="P:tRNA threonylcarbamoyladenosine modification"/>
    <property type="evidence" value="ECO:0007669"/>
    <property type="project" value="InterPro"/>
</dbReference>
<dbReference type="Gene3D" id="3.40.50.300">
    <property type="entry name" value="P-loop containing nucleotide triphosphate hydrolases"/>
    <property type="match status" value="1"/>
</dbReference>
<dbReference type="InterPro" id="IPR027417">
    <property type="entry name" value="P-loop_NTPase"/>
</dbReference>
<dbReference type="InterPro" id="IPR003442">
    <property type="entry name" value="T6A_TsaE"/>
</dbReference>
<dbReference type="NCBIfam" id="TIGR00150">
    <property type="entry name" value="T6A_YjeE"/>
    <property type="match status" value="1"/>
</dbReference>
<dbReference type="PANTHER" id="PTHR33540">
    <property type="entry name" value="TRNA THREONYLCARBAMOYLADENOSINE BIOSYNTHESIS PROTEIN TSAE"/>
    <property type="match status" value="1"/>
</dbReference>
<dbReference type="PANTHER" id="PTHR33540:SF2">
    <property type="entry name" value="TRNA THREONYLCARBAMOYLADENOSINE BIOSYNTHESIS PROTEIN TSAE"/>
    <property type="match status" value="1"/>
</dbReference>
<dbReference type="Pfam" id="PF02367">
    <property type="entry name" value="TsaE"/>
    <property type="match status" value="1"/>
</dbReference>
<dbReference type="SUPFAM" id="SSF52540">
    <property type="entry name" value="P-loop containing nucleoside triphosphate hydrolases"/>
    <property type="match status" value="1"/>
</dbReference>
<sequence length="171" mass="19618">MLILNNEEETKKLAKLLAQSLKPNDIVLLNGDLGAGKTFFCREIIKHFCGENTNIISPTFNLLQTYKTSNFTIYHYDLYRLKSPEEIYELGFEEALNGNLILIEWSEIIKHLLTPPLIEVNLEVLDENKRLCSIITNSSESSLIDFLQASPLFSTKLDIQRDKSPTRKIEL</sequence>
<keyword id="KW-0067">ATP-binding</keyword>
<keyword id="KW-0963">Cytoplasm</keyword>
<keyword id="KW-0460">Magnesium</keyword>
<keyword id="KW-0479">Metal-binding</keyword>
<keyword id="KW-0547">Nucleotide-binding</keyword>
<keyword id="KW-0819">tRNA processing</keyword>
<comment type="function">
    <text evidence="1">Required for the formation of a threonylcarbamoyl group on adenosine at position 37 (t(6)A37) in tRNAs that read codons beginning with adenine. Is involved in the transfer of the threonylcarbamoyl moiety of threonylcarbamoyl-AMP (TC-AMP) to the N6 group of A37, together with TsaD and TsaB. TsaE seems to play an indirect role in the t(6)A biosynthesis pathway, possibly in regulating the core enzymatic function of TsaD (By similarity).</text>
</comment>
<comment type="subcellular location">
    <subcellularLocation>
        <location evidence="1">Cytoplasm</location>
    </subcellularLocation>
</comment>
<comment type="similarity">
    <text evidence="2">Belongs to the TsaE family.</text>
</comment>
<protein>
    <recommendedName>
        <fullName>tRNA threonylcarbamoyladenosine biosynthesis protein TsaE</fullName>
    </recommendedName>
    <alternativeName>
        <fullName>t(6)A37 threonylcarbamoyladenosine biosynthesis protein TsaE</fullName>
    </alternativeName>
</protein>
<evidence type="ECO:0000250" key="1"/>
<evidence type="ECO:0000305" key="2"/>
<accession>Q4UNJ0</accession>